<gene>
    <name type="primary">Stxbp2</name>
    <name type="synonym">Unc18b</name>
</gene>
<evidence type="ECO:0000250" key="1"/>
<evidence type="ECO:0000305" key="2"/>
<reference key="1">
    <citation type="journal article" date="1995" name="J. Biol. Chem.">
        <title>A novel ubiquitous form of Munc-18 interacts with multiple syntaxins. Use of the yeast two-hybrid system to study interactions between proteins involved in membrane traffic.</title>
        <authorList>
            <person name="Hata Y."/>
            <person name="Suedhof T.C."/>
        </authorList>
    </citation>
    <scope>NUCLEOTIDE SEQUENCE [MRNA]</scope>
    <source>
        <tissue>Brain</tissue>
        <tissue>Liver</tissue>
    </source>
</reference>
<comment type="function">
    <text evidence="1">Involved in intracellular vesicle trafficking and vesicle fusion with membranes. Contributes to the granule exocytosis machinery through interaction with soluble N-ethylmaleimide-sensitive factor attachment protein receptor (SNARE) proteins that regulate membrane fusion. Regulates cytotoxic granule exocytosis in natural killer (NK) cells (By similarity).</text>
</comment>
<comment type="subunit">
    <text evidence="1">Interacts with STX1A, STX2 and STX3. Interacts with STX11.</text>
</comment>
<comment type="similarity">
    <text evidence="2">Belongs to the STXBP/unc-18/SEC1 family.</text>
</comment>
<dbReference type="EMBL" id="U20283">
    <property type="protein sequence ID" value="AAA79516.1"/>
    <property type="molecule type" value="mRNA"/>
</dbReference>
<dbReference type="PIR" id="A57022">
    <property type="entry name" value="A57022"/>
</dbReference>
<dbReference type="RefSeq" id="NP_112388.1">
    <property type="nucleotide sequence ID" value="NM_031126.1"/>
</dbReference>
<dbReference type="SMR" id="Q62753"/>
<dbReference type="BioGRID" id="249662">
    <property type="interactions" value="4"/>
</dbReference>
<dbReference type="DIP" id="DIP-289N"/>
<dbReference type="FunCoup" id="Q62753">
    <property type="interactions" value="1350"/>
</dbReference>
<dbReference type="IntAct" id="Q62753">
    <property type="interactions" value="8"/>
</dbReference>
<dbReference type="STRING" id="10116.ENSRNOP00000001322"/>
<dbReference type="iPTMnet" id="Q62753"/>
<dbReference type="PhosphoSitePlus" id="Q62753"/>
<dbReference type="PaxDb" id="10116-ENSRNOP00000001322"/>
<dbReference type="GeneID" id="81804"/>
<dbReference type="KEGG" id="rno:81804"/>
<dbReference type="UCSC" id="RGD:619967">
    <property type="organism name" value="rat"/>
</dbReference>
<dbReference type="AGR" id="RGD:619967"/>
<dbReference type="CTD" id="6813"/>
<dbReference type="RGD" id="619967">
    <property type="gene designation" value="Stxbp2"/>
</dbReference>
<dbReference type="eggNOG" id="KOG1300">
    <property type="taxonomic scope" value="Eukaryota"/>
</dbReference>
<dbReference type="InParanoid" id="Q62753"/>
<dbReference type="OrthoDB" id="31216at9989"/>
<dbReference type="PhylomeDB" id="Q62753"/>
<dbReference type="Reactome" id="R-RNO-114608">
    <property type="pathway name" value="Platelet degranulation"/>
</dbReference>
<dbReference type="Reactome" id="R-RNO-449836">
    <property type="pathway name" value="Other interleukin signaling"/>
</dbReference>
<dbReference type="PRO" id="PR:Q62753"/>
<dbReference type="Proteomes" id="UP000002494">
    <property type="component" value="Unplaced"/>
</dbReference>
<dbReference type="GO" id="GO:0016324">
    <property type="term" value="C:apical plasma membrane"/>
    <property type="evidence" value="ECO:0000314"/>
    <property type="project" value="RGD"/>
</dbReference>
<dbReference type="GO" id="GO:0042582">
    <property type="term" value="C:azurophil granule"/>
    <property type="evidence" value="ECO:0000266"/>
    <property type="project" value="RGD"/>
</dbReference>
<dbReference type="GO" id="GO:0044194">
    <property type="term" value="C:cytolytic granule"/>
    <property type="evidence" value="ECO:0000266"/>
    <property type="project" value="RGD"/>
</dbReference>
<dbReference type="GO" id="GO:0005829">
    <property type="term" value="C:cytosol"/>
    <property type="evidence" value="ECO:0000266"/>
    <property type="project" value="RGD"/>
</dbReference>
<dbReference type="GO" id="GO:0030027">
    <property type="term" value="C:lamellipodium"/>
    <property type="evidence" value="ECO:0000314"/>
    <property type="project" value="RGD"/>
</dbReference>
<dbReference type="GO" id="GO:0045335">
    <property type="term" value="C:phagocytic vesicle"/>
    <property type="evidence" value="ECO:0000266"/>
    <property type="project" value="RGD"/>
</dbReference>
<dbReference type="GO" id="GO:0005886">
    <property type="term" value="C:plasma membrane"/>
    <property type="evidence" value="ECO:0000266"/>
    <property type="project" value="RGD"/>
</dbReference>
<dbReference type="GO" id="GO:0098793">
    <property type="term" value="C:presynapse"/>
    <property type="evidence" value="ECO:0007669"/>
    <property type="project" value="GOC"/>
</dbReference>
<dbReference type="GO" id="GO:0032991">
    <property type="term" value="C:protein-containing complex"/>
    <property type="evidence" value="ECO:0000314"/>
    <property type="project" value="RGD"/>
</dbReference>
<dbReference type="GO" id="GO:0030141">
    <property type="term" value="C:secretory granule"/>
    <property type="evidence" value="ECO:0000314"/>
    <property type="project" value="RGD"/>
</dbReference>
<dbReference type="GO" id="GO:0042581">
    <property type="term" value="C:specific granule"/>
    <property type="evidence" value="ECO:0000266"/>
    <property type="project" value="RGD"/>
</dbReference>
<dbReference type="GO" id="GO:0070820">
    <property type="term" value="C:tertiary granule"/>
    <property type="evidence" value="ECO:0000266"/>
    <property type="project" value="RGD"/>
</dbReference>
<dbReference type="GO" id="GO:0042589">
    <property type="term" value="C:zymogen granule membrane"/>
    <property type="evidence" value="ECO:0000266"/>
    <property type="project" value="RGD"/>
</dbReference>
<dbReference type="GO" id="GO:0019905">
    <property type="term" value="F:syntaxin binding"/>
    <property type="evidence" value="ECO:0000353"/>
    <property type="project" value="RGD"/>
</dbReference>
<dbReference type="GO" id="GO:0017075">
    <property type="term" value="F:syntaxin-1 binding"/>
    <property type="evidence" value="ECO:0000353"/>
    <property type="project" value="RGD"/>
</dbReference>
<dbReference type="GO" id="GO:0030348">
    <property type="term" value="F:syntaxin-3 binding"/>
    <property type="evidence" value="ECO:0000353"/>
    <property type="project" value="RGD"/>
</dbReference>
<dbReference type="GO" id="GO:0071346">
    <property type="term" value="P:cellular response to type II interferon"/>
    <property type="evidence" value="ECO:0000266"/>
    <property type="project" value="RGD"/>
</dbReference>
<dbReference type="GO" id="GO:0006887">
    <property type="term" value="P:exocytosis"/>
    <property type="evidence" value="ECO:0000266"/>
    <property type="project" value="RGD"/>
</dbReference>
<dbReference type="GO" id="GO:0006886">
    <property type="term" value="P:intracellular protein transport"/>
    <property type="evidence" value="ECO:0000318"/>
    <property type="project" value="GO_Central"/>
</dbReference>
<dbReference type="GO" id="GO:0001909">
    <property type="term" value="P:leukocyte mediated cytotoxicity"/>
    <property type="evidence" value="ECO:0000266"/>
    <property type="project" value="RGD"/>
</dbReference>
<dbReference type="GO" id="GO:0043312">
    <property type="term" value="P:neutrophil degranulation"/>
    <property type="evidence" value="ECO:0000266"/>
    <property type="project" value="RGD"/>
</dbReference>
<dbReference type="GO" id="GO:0043306">
    <property type="term" value="P:positive regulation of mast cell degranulation"/>
    <property type="evidence" value="ECO:0000315"/>
    <property type="project" value="RGD"/>
</dbReference>
<dbReference type="GO" id="GO:0099525">
    <property type="term" value="P:presynaptic dense core vesicle exocytosis"/>
    <property type="evidence" value="ECO:0000318"/>
    <property type="project" value="GO_Central"/>
</dbReference>
<dbReference type="GO" id="GO:0043304">
    <property type="term" value="P:regulation of mast cell degranulation"/>
    <property type="evidence" value="ECO:0000315"/>
    <property type="project" value="RGD"/>
</dbReference>
<dbReference type="GO" id="GO:0010447">
    <property type="term" value="P:response to acidic pH"/>
    <property type="evidence" value="ECO:0000270"/>
    <property type="project" value="RGD"/>
</dbReference>
<dbReference type="GO" id="GO:0016079">
    <property type="term" value="P:synaptic vesicle exocytosis"/>
    <property type="evidence" value="ECO:0000304"/>
    <property type="project" value="RGD"/>
</dbReference>
<dbReference type="GO" id="GO:0006904">
    <property type="term" value="P:vesicle docking involved in exocytosis"/>
    <property type="evidence" value="ECO:0000318"/>
    <property type="project" value="GO_Central"/>
</dbReference>
<dbReference type="FunFam" id="3.40.50.2060:FF:000001">
    <property type="entry name" value="syntaxin-binding protein 1 isoform X2"/>
    <property type="match status" value="1"/>
</dbReference>
<dbReference type="FunFam" id="3.90.830.10:FF:000001">
    <property type="entry name" value="syntaxin-binding protein 1 isoform X2"/>
    <property type="match status" value="1"/>
</dbReference>
<dbReference type="Gene3D" id="1.25.40.60">
    <property type="match status" value="1"/>
</dbReference>
<dbReference type="Gene3D" id="3.40.50.1910">
    <property type="match status" value="1"/>
</dbReference>
<dbReference type="Gene3D" id="3.40.50.2060">
    <property type="match status" value="1"/>
</dbReference>
<dbReference type="Gene3D" id="3.90.830.10">
    <property type="entry name" value="Syntaxin Binding Protein 1, Chain A, domain 2"/>
    <property type="match status" value="1"/>
</dbReference>
<dbReference type="InterPro" id="IPR043154">
    <property type="entry name" value="Sec-1-like_dom1"/>
</dbReference>
<dbReference type="InterPro" id="IPR043127">
    <property type="entry name" value="Sec-1-like_dom3a"/>
</dbReference>
<dbReference type="InterPro" id="IPR001619">
    <property type="entry name" value="Sec1-like"/>
</dbReference>
<dbReference type="InterPro" id="IPR027482">
    <property type="entry name" value="Sec1-like_dom2"/>
</dbReference>
<dbReference type="InterPro" id="IPR036045">
    <property type="entry name" value="Sec1-like_sf"/>
</dbReference>
<dbReference type="PANTHER" id="PTHR11679">
    <property type="entry name" value="VESICLE PROTEIN SORTING-ASSOCIATED"/>
    <property type="match status" value="1"/>
</dbReference>
<dbReference type="Pfam" id="PF00995">
    <property type="entry name" value="Sec1"/>
    <property type="match status" value="1"/>
</dbReference>
<dbReference type="PIRSF" id="PIRSF005715">
    <property type="entry name" value="VPS45_Sec1"/>
    <property type="match status" value="1"/>
</dbReference>
<dbReference type="SUPFAM" id="SSF56815">
    <property type="entry name" value="Sec1/munc18-like (SM) proteins"/>
    <property type="match status" value="1"/>
</dbReference>
<sequence length="594" mass="66696">MAPLGLKAVVVEKILSGVIRSVKKDGEWKVLIMDHPSMRILSSCCKMSDILAEGITIVEDINKRREPIPSLEAIYLLSPTEKSVQALIADFQGTPTFTYKAAHIFFTDTCPEPLFSELGRSRLAKVVKTLKEIHLAFLPYEAQVFSLDAPHSTYNLYCPFRAGERGRQLDVLAQQIATLCATLQEYPSIRYRKGPEDTAQLAHAVLAKLNAFKADTPSLGEGPEKTRSQLLIMDRAADPVSPLLHELTFQAMAYDLLHIEQDTYRYETTGLSESREKAVLLDEDDDLWVELRHMHIADVSKKVTELLKTFCESKRLTTDKANIKDLSHILKKMPQYQKELNKYSTHLHLADDCMKHFKGSVEKLCGVEQDLAMGSDAEGEKIKDTMKLIVPVLLDASVPPYDKIRVLLLYILLRNGVSEENLAKLIQHANVQSYSNLIRNLEQLGGTVTNSAGSGTSSRLERRERMEPTYQLSRWSPVIKDVMEDVVEDRLDRKLWPFVSDPAPVSSSQAAVSSARFGHWHKNKAGIEARAGPRLIVYIVGGVAMSEMRAAYEVTRATEGKWEVLIGSSHILTPTRFLDDLRTLDQKLEDIALP</sequence>
<name>STXB2_RAT</name>
<organism>
    <name type="scientific">Rattus norvegicus</name>
    <name type="common">Rat</name>
    <dbReference type="NCBI Taxonomy" id="10116"/>
    <lineage>
        <taxon>Eukaryota</taxon>
        <taxon>Metazoa</taxon>
        <taxon>Chordata</taxon>
        <taxon>Craniata</taxon>
        <taxon>Vertebrata</taxon>
        <taxon>Euteleostomi</taxon>
        <taxon>Mammalia</taxon>
        <taxon>Eutheria</taxon>
        <taxon>Euarchontoglires</taxon>
        <taxon>Glires</taxon>
        <taxon>Rodentia</taxon>
        <taxon>Myomorpha</taxon>
        <taxon>Muroidea</taxon>
        <taxon>Muridae</taxon>
        <taxon>Murinae</taxon>
        <taxon>Rattus</taxon>
    </lineage>
</organism>
<proteinExistence type="evidence at transcript level"/>
<protein>
    <recommendedName>
        <fullName>Syntaxin-binding protein 2</fullName>
    </recommendedName>
    <alternativeName>
        <fullName>Protein unc-18 homolog 2</fullName>
        <shortName>Munc18-2</shortName>
        <shortName>Unc18-2</shortName>
    </alternativeName>
    <alternativeName>
        <fullName>Protein unc-18 homolog B</fullName>
        <shortName>Unc-18B</shortName>
    </alternativeName>
</protein>
<feature type="chain" id="PRO_0000206284" description="Syntaxin-binding protein 2">
    <location>
        <begin position="1"/>
        <end position="594"/>
    </location>
</feature>
<accession>Q62753</accession>
<keyword id="KW-0268">Exocytosis</keyword>
<keyword id="KW-0653">Protein transport</keyword>
<keyword id="KW-1185">Reference proteome</keyword>
<keyword id="KW-0813">Transport</keyword>